<comment type="function">
    <text evidence="3">Involved in the degradation of the Pseudomonas aeruginosa quorum sensing signal molecules HHQ (2-heptyl-4-quinolone) and PQS (2-heptyl-3-hydroxy-4-quinolone) to anthranilic acid. Probably catalyzes the hydrolysis of N-octanoylanthranilic acid to anthranilic acid.</text>
</comment>
<comment type="catalytic activity">
    <reaction evidence="6">
        <text>N-octanoylanthranilate + H2O = anthranilate + octanoate + H(+)</text>
        <dbReference type="Rhea" id="RHEA:60356"/>
        <dbReference type="ChEBI" id="CHEBI:15377"/>
        <dbReference type="ChEBI" id="CHEBI:15378"/>
        <dbReference type="ChEBI" id="CHEBI:16567"/>
        <dbReference type="ChEBI" id="CHEBI:25646"/>
        <dbReference type="ChEBI" id="CHEBI:143722"/>
    </reaction>
    <physiologicalReaction direction="left-to-right" evidence="6">
        <dbReference type="Rhea" id="RHEA:60357"/>
    </physiologicalReaction>
</comment>
<comment type="induction">
    <text evidence="3">Up-regulated by PQS.</text>
</comment>
<comment type="similarity">
    <text evidence="5">Belongs to the type-B carboxylesterase/lipase family.</text>
</comment>
<dbReference type="EC" id="3.5.1.-" evidence="6"/>
<dbReference type="EMBL" id="CP011296">
    <property type="protein sequence ID" value="AKE01140.1"/>
    <property type="molecule type" value="Genomic_DNA"/>
</dbReference>
<dbReference type="RefSeq" id="WP_046380183.1">
    <property type="nucleotide sequence ID" value="NZ_CP011296.1"/>
</dbReference>
<dbReference type="SMR" id="A0A0E4AET8"/>
<dbReference type="ESTHER" id="rhoer-a0a0e4aet8">
    <property type="family name" value="Carb_B_Bacteria"/>
</dbReference>
<dbReference type="KEGG" id="reb:XU06_29730"/>
<dbReference type="PATRIC" id="fig|1833.80.peg.6123"/>
<dbReference type="GO" id="GO:0016787">
    <property type="term" value="F:hydrolase activity"/>
    <property type="evidence" value="ECO:0007669"/>
    <property type="project" value="UniProtKB-KW"/>
</dbReference>
<dbReference type="Gene3D" id="3.40.50.1820">
    <property type="entry name" value="alpha/beta hydrolase"/>
    <property type="match status" value="1"/>
</dbReference>
<dbReference type="InterPro" id="IPR029058">
    <property type="entry name" value="AB_hydrolase_fold"/>
</dbReference>
<dbReference type="InterPro" id="IPR002018">
    <property type="entry name" value="CarbesteraseB"/>
</dbReference>
<dbReference type="InterPro" id="IPR019826">
    <property type="entry name" value="Carboxylesterase_B_AS"/>
</dbReference>
<dbReference type="PANTHER" id="PTHR43142">
    <property type="entry name" value="CARBOXYLIC ESTER HYDROLASE"/>
    <property type="match status" value="1"/>
</dbReference>
<dbReference type="PANTHER" id="PTHR43142:SF1">
    <property type="entry name" value="CARBOXYLIC ESTER HYDROLASE"/>
    <property type="match status" value="1"/>
</dbReference>
<dbReference type="Pfam" id="PF00135">
    <property type="entry name" value="COesterase"/>
    <property type="match status" value="1"/>
</dbReference>
<dbReference type="SUPFAM" id="SSF53474">
    <property type="entry name" value="alpha/beta-Hydrolases"/>
    <property type="match status" value="1"/>
</dbReference>
<dbReference type="PROSITE" id="PS00122">
    <property type="entry name" value="CARBOXYLESTERASE_B_1"/>
    <property type="match status" value="1"/>
</dbReference>
<feature type="chain" id="PRO_0000447586" description="Probable N-octanoylanthranilate hydrolase AqdA2">
    <location>
        <begin position="1"/>
        <end position="454"/>
    </location>
</feature>
<feature type="active site" description="Acyl-ester intermediate" evidence="2">
    <location>
        <position position="185"/>
    </location>
</feature>
<feature type="active site" description="Charge relay system" evidence="1">
    <location>
        <position position="306"/>
    </location>
</feature>
<feature type="active site" description="Charge relay system" evidence="1">
    <location>
        <position position="379"/>
    </location>
</feature>
<name>AQDA2_RHOER</name>
<organism>
    <name type="scientific">Rhodococcus erythropolis</name>
    <name type="common">Arthrobacter picolinophilus</name>
    <dbReference type="NCBI Taxonomy" id="1833"/>
    <lineage>
        <taxon>Bacteria</taxon>
        <taxon>Bacillati</taxon>
        <taxon>Actinomycetota</taxon>
        <taxon>Actinomycetes</taxon>
        <taxon>Mycobacteriales</taxon>
        <taxon>Nocardiaceae</taxon>
        <taxon>Rhodococcus</taxon>
        <taxon>Rhodococcus erythropolis group</taxon>
    </lineage>
</organism>
<accession>A0A0E4AET8</accession>
<reference key="1">
    <citation type="journal article" date="2015" name="J. Biotechnol.">
        <title>Complete genome sequence of Rhodococcus erythropolis BG43 (DSM 46869), a degrader of Pseudomonas aeruginosa quorum sensing signal molecules.</title>
        <authorList>
            <person name="Rueckert C."/>
            <person name="Birmes F.S."/>
            <person name="Mueller C."/>
            <person name="Niewerth H."/>
            <person name="Winkler A."/>
            <person name="Fetzner S."/>
            <person name="Kalinowski J."/>
        </authorList>
    </citation>
    <scope>NUCLEOTIDE SEQUENCE [LARGE SCALE GENOMIC DNA]</scope>
    <source>
        <strain>DSM 46869 / BG43</strain>
    </source>
</reference>
<reference key="2">
    <citation type="journal article" date="2015" name="Appl. Environ. Microbiol.">
        <title>Rhodococcus erythropolis BG43 genes mediating Pseudomonas aeruginosa quinolone signal degradation and virulence factor attenuation.</title>
        <authorList>
            <person name="Mueller C."/>
            <person name="Birmes F.S."/>
            <person name="Rueckert C."/>
            <person name="Kalinowski J."/>
            <person name="Fetzner S."/>
        </authorList>
    </citation>
    <scope>FUNCTION</scope>
    <scope>CATALYTIC ACTIVITY</scope>
    <scope>INDUCTION</scope>
    <source>
        <strain>DSM 46869 / BG43</strain>
    </source>
</reference>
<sequence>MFQTVTAPTGVWRGRVTGDVTVFHGIQYARADRFAPPQRCEPQLQHLVEVPEPGPIAPQSPSRLEGVMGAPSSLKQSEACLTVTVTTPHLAQPGSLPVLVWLHGGAFLSGSGAWEQYGAEQLVRETGIVVVSVNYRLGVLGYLCAPGISSGNLGLLDQITALEWVRDNIEAFGGDNGRVTLDGQSAGAHSIVAMLGIDRARSLFSRAIIQSAPLGLGFHSVEQARRAAEIFEEELGSDPRRAVVTDILAAQARTAHRLAGRGAMNSAPPFLPVHGMAPLPFVGEWNGKVAANAARRKILIGNTRDEMAAFFGPHPVFSAMRRVPLAGPQLAGAIQRRVQKVVFDNPVQEFADRFASAGASVWRYGIGPLHPDNPFGACHCIDIPLLFGDGDTWRDAPMLRPLSPKEIGESGTRTRRYWGEFVHTGRISDPAWPMHRPKSRYAHLLTDETIGGSA</sequence>
<protein>
    <recommendedName>
        <fullName evidence="5">Probable N-octanoylanthranilate hydrolase AqdA2</fullName>
        <ecNumber evidence="6">3.5.1.-</ecNumber>
    </recommendedName>
</protein>
<gene>
    <name evidence="4" type="primary">aqdA2</name>
    <name evidence="7" type="ORF">XU06_29730</name>
</gene>
<evidence type="ECO:0000250" key="1">
    <source>
        <dbReference type="UniProtKB" id="P23141"/>
    </source>
</evidence>
<evidence type="ECO:0000255" key="2">
    <source>
        <dbReference type="PROSITE-ProRule" id="PRU10039"/>
    </source>
</evidence>
<evidence type="ECO:0000269" key="3">
    <source>
    </source>
</evidence>
<evidence type="ECO:0000303" key="4">
    <source>
    </source>
</evidence>
<evidence type="ECO:0000305" key="5"/>
<evidence type="ECO:0000305" key="6">
    <source>
    </source>
</evidence>
<evidence type="ECO:0000312" key="7">
    <source>
        <dbReference type="EMBL" id="AKE01140.1"/>
    </source>
</evidence>
<geneLocation type="plasmid">
    <name>pRLCBG43</name>
</geneLocation>
<proteinExistence type="evidence at protein level"/>
<keyword id="KW-0378">Hydrolase</keyword>
<keyword id="KW-0614">Plasmid</keyword>